<organism>
    <name type="scientific">Escherichia coli (strain K12 / DH10B)</name>
    <dbReference type="NCBI Taxonomy" id="316385"/>
    <lineage>
        <taxon>Bacteria</taxon>
        <taxon>Pseudomonadati</taxon>
        <taxon>Pseudomonadota</taxon>
        <taxon>Gammaproteobacteria</taxon>
        <taxon>Enterobacterales</taxon>
        <taxon>Enterobacteriaceae</taxon>
        <taxon>Escherichia</taxon>
    </lineage>
</organism>
<reference key="1">
    <citation type="journal article" date="2008" name="J. Bacteriol.">
        <title>The complete genome sequence of Escherichia coli DH10B: insights into the biology of a laboratory workhorse.</title>
        <authorList>
            <person name="Durfee T."/>
            <person name="Nelson R."/>
            <person name="Baldwin S."/>
            <person name="Plunkett G. III"/>
            <person name="Burland V."/>
            <person name="Mau B."/>
            <person name="Petrosino J.F."/>
            <person name="Qin X."/>
            <person name="Muzny D.M."/>
            <person name="Ayele M."/>
            <person name="Gibbs R.A."/>
            <person name="Csorgo B."/>
            <person name="Posfai G."/>
            <person name="Weinstock G.M."/>
            <person name="Blattner F.R."/>
        </authorList>
    </citation>
    <scope>NUCLEOTIDE SEQUENCE [LARGE SCALE GENOMIC DNA]</scope>
    <source>
        <strain>K12 / DH10B</strain>
    </source>
</reference>
<protein>
    <recommendedName>
        <fullName evidence="1">Universal stress protein B</fullName>
    </recommendedName>
</protein>
<sequence length="111" mass="13027">MISTVALFWALCVVCIVNMARYFSSLRALLVVLRNCDPLLYQYVDGGGFFTSHGQPNKQVRLVWYIYAQRYRDHHDDEFIRRCERVRRQFILTSALCGLVVVSLIALMIWH</sequence>
<proteinExistence type="inferred from homology"/>
<comment type="subcellular location">
    <subcellularLocation>
        <location evidence="1">Cell inner membrane</location>
        <topology evidence="1">Multi-pass membrane protein</topology>
    </subcellularLocation>
</comment>
<comment type="similarity">
    <text evidence="1">Belongs to the universal stress protein B family.</text>
</comment>
<feature type="chain" id="PRO_1000136914" description="Universal stress protein B">
    <location>
        <begin position="1"/>
        <end position="111"/>
    </location>
</feature>
<feature type="transmembrane region" description="Helical" evidence="1">
    <location>
        <begin position="1"/>
        <end position="21"/>
    </location>
</feature>
<feature type="transmembrane region" description="Helical" evidence="1">
    <location>
        <begin position="90"/>
        <end position="110"/>
    </location>
</feature>
<gene>
    <name evidence="1" type="primary">uspB</name>
    <name type="ordered locus">ECDH10B_3670</name>
</gene>
<accession>B1X7U9</accession>
<dbReference type="EMBL" id="CP000948">
    <property type="protein sequence ID" value="ACB04547.1"/>
    <property type="molecule type" value="Genomic_DNA"/>
</dbReference>
<dbReference type="RefSeq" id="WP_000626187.1">
    <property type="nucleotide sequence ID" value="NC_010473.1"/>
</dbReference>
<dbReference type="SMR" id="B1X7U9"/>
<dbReference type="GeneID" id="93778499"/>
<dbReference type="KEGG" id="ecd:ECDH10B_3670"/>
<dbReference type="HOGENOM" id="CLU_151816_0_0_6"/>
<dbReference type="GO" id="GO:0005886">
    <property type="term" value="C:plasma membrane"/>
    <property type="evidence" value="ECO:0007669"/>
    <property type="project" value="UniProtKB-SubCell"/>
</dbReference>
<dbReference type="HAMAP" id="MF_01088">
    <property type="entry name" value="UspB"/>
    <property type="match status" value="1"/>
</dbReference>
<dbReference type="InterPro" id="IPR019598">
    <property type="entry name" value="Universal_stress_protein_B"/>
</dbReference>
<dbReference type="NCBIfam" id="NF003435">
    <property type="entry name" value="PRK04960.1"/>
    <property type="match status" value="1"/>
</dbReference>
<dbReference type="Pfam" id="PF10625">
    <property type="entry name" value="UspB"/>
    <property type="match status" value="1"/>
</dbReference>
<keyword id="KW-0997">Cell inner membrane</keyword>
<keyword id="KW-1003">Cell membrane</keyword>
<keyword id="KW-0472">Membrane</keyword>
<keyword id="KW-0812">Transmembrane</keyword>
<keyword id="KW-1133">Transmembrane helix</keyword>
<evidence type="ECO:0000255" key="1">
    <source>
        <dbReference type="HAMAP-Rule" id="MF_01088"/>
    </source>
</evidence>
<name>USPB_ECODH</name>